<dbReference type="EMBL" id="AE001437">
    <property type="protein sequence ID" value="AAK79711.1"/>
    <property type="molecule type" value="Genomic_DNA"/>
</dbReference>
<dbReference type="PIR" id="D97115">
    <property type="entry name" value="D97115"/>
</dbReference>
<dbReference type="RefSeq" id="NP_348371.1">
    <property type="nucleotide sequence ID" value="NC_003030.1"/>
</dbReference>
<dbReference type="RefSeq" id="WP_010965052.1">
    <property type="nucleotide sequence ID" value="NC_003030.1"/>
</dbReference>
<dbReference type="SMR" id="Q97IA7"/>
<dbReference type="STRING" id="272562.CA_C1745"/>
<dbReference type="GeneID" id="44998240"/>
<dbReference type="KEGG" id="cac:CA_C1745"/>
<dbReference type="PATRIC" id="fig|272562.8.peg.1948"/>
<dbReference type="eggNOG" id="COG0333">
    <property type="taxonomic scope" value="Bacteria"/>
</dbReference>
<dbReference type="HOGENOM" id="CLU_129084_1_3_9"/>
<dbReference type="OrthoDB" id="9812874at2"/>
<dbReference type="Proteomes" id="UP000000814">
    <property type="component" value="Chromosome"/>
</dbReference>
<dbReference type="GO" id="GO:0015934">
    <property type="term" value="C:large ribosomal subunit"/>
    <property type="evidence" value="ECO:0007669"/>
    <property type="project" value="InterPro"/>
</dbReference>
<dbReference type="GO" id="GO:0003735">
    <property type="term" value="F:structural constituent of ribosome"/>
    <property type="evidence" value="ECO:0007669"/>
    <property type="project" value="InterPro"/>
</dbReference>
<dbReference type="GO" id="GO:0006412">
    <property type="term" value="P:translation"/>
    <property type="evidence" value="ECO:0007669"/>
    <property type="project" value="UniProtKB-UniRule"/>
</dbReference>
<dbReference type="HAMAP" id="MF_00340">
    <property type="entry name" value="Ribosomal_bL32"/>
    <property type="match status" value="1"/>
</dbReference>
<dbReference type="InterPro" id="IPR002677">
    <property type="entry name" value="Ribosomal_bL32"/>
</dbReference>
<dbReference type="InterPro" id="IPR044957">
    <property type="entry name" value="Ribosomal_bL32_bact"/>
</dbReference>
<dbReference type="InterPro" id="IPR011332">
    <property type="entry name" value="Ribosomal_zn-bd"/>
</dbReference>
<dbReference type="NCBIfam" id="TIGR01031">
    <property type="entry name" value="rpmF_bact"/>
    <property type="match status" value="1"/>
</dbReference>
<dbReference type="PANTHER" id="PTHR35534">
    <property type="entry name" value="50S RIBOSOMAL PROTEIN L32"/>
    <property type="match status" value="1"/>
</dbReference>
<dbReference type="PANTHER" id="PTHR35534:SF1">
    <property type="entry name" value="LARGE RIBOSOMAL SUBUNIT PROTEIN BL32"/>
    <property type="match status" value="1"/>
</dbReference>
<dbReference type="Pfam" id="PF01783">
    <property type="entry name" value="Ribosomal_L32p"/>
    <property type="match status" value="1"/>
</dbReference>
<dbReference type="SUPFAM" id="SSF57829">
    <property type="entry name" value="Zn-binding ribosomal proteins"/>
    <property type="match status" value="1"/>
</dbReference>
<protein>
    <recommendedName>
        <fullName evidence="1">Large ribosomal subunit protein bL32</fullName>
    </recommendedName>
    <alternativeName>
        <fullName evidence="2">50S ribosomal protein L32</fullName>
    </alternativeName>
</protein>
<comment type="similarity">
    <text evidence="1">Belongs to the bacterial ribosomal protein bL32 family.</text>
</comment>
<name>RL32_CLOAB</name>
<organism>
    <name type="scientific">Clostridium acetobutylicum (strain ATCC 824 / DSM 792 / JCM 1419 / IAM 19013 / LMG 5710 / NBRC 13948 / NRRL B-527 / VKM B-1787 / 2291 / W)</name>
    <dbReference type="NCBI Taxonomy" id="272562"/>
    <lineage>
        <taxon>Bacteria</taxon>
        <taxon>Bacillati</taxon>
        <taxon>Bacillota</taxon>
        <taxon>Clostridia</taxon>
        <taxon>Eubacteriales</taxon>
        <taxon>Clostridiaceae</taxon>
        <taxon>Clostridium</taxon>
    </lineage>
</organism>
<sequence length="60" mass="6884">MGNPARKFSKARRDSRRAQTFKLSLPGMVECPNCHEMKLAHRVCKKCGYYKGKEIVAVEK</sequence>
<reference key="1">
    <citation type="journal article" date="2001" name="J. Bacteriol.">
        <title>Genome sequence and comparative analysis of the solvent-producing bacterium Clostridium acetobutylicum.</title>
        <authorList>
            <person name="Noelling J."/>
            <person name="Breton G."/>
            <person name="Omelchenko M.V."/>
            <person name="Makarova K.S."/>
            <person name="Zeng Q."/>
            <person name="Gibson R."/>
            <person name="Lee H.M."/>
            <person name="Dubois J."/>
            <person name="Qiu D."/>
            <person name="Hitti J."/>
            <person name="Wolf Y.I."/>
            <person name="Tatusov R.L."/>
            <person name="Sabathe F."/>
            <person name="Doucette-Stamm L.A."/>
            <person name="Soucaille P."/>
            <person name="Daly M.J."/>
            <person name="Bennett G.N."/>
            <person name="Koonin E.V."/>
            <person name="Smith D.R."/>
        </authorList>
    </citation>
    <scope>NUCLEOTIDE SEQUENCE [LARGE SCALE GENOMIC DNA]</scope>
    <source>
        <strain>ATCC 824 / DSM 792 / JCM 1419 / IAM 19013 / LMG 5710 / NBRC 13948 / NRRL B-527 / VKM B-1787 / 2291 / W</strain>
    </source>
</reference>
<feature type="chain" id="PRO_0000172331" description="Large ribosomal subunit protein bL32">
    <location>
        <begin position="1"/>
        <end position="60"/>
    </location>
</feature>
<proteinExistence type="inferred from homology"/>
<keyword id="KW-1185">Reference proteome</keyword>
<keyword id="KW-0687">Ribonucleoprotein</keyword>
<keyword id="KW-0689">Ribosomal protein</keyword>
<gene>
    <name evidence="1" type="primary">rpmF</name>
    <name type="ordered locus">CA_C1745</name>
</gene>
<accession>Q97IA7</accession>
<evidence type="ECO:0000255" key="1">
    <source>
        <dbReference type="HAMAP-Rule" id="MF_00340"/>
    </source>
</evidence>
<evidence type="ECO:0000305" key="2"/>